<feature type="chain" id="PRO_1000204721" description="Small ribosomal subunit protein bS18">
    <location>
        <begin position="1"/>
        <end position="80"/>
    </location>
</feature>
<gene>
    <name evidence="1" type="primary">rpsR</name>
    <name type="ordered locus">CLJ_B3965</name>
</gene>
<dbReference type="EMBL" id="CP001083">
    <property type="protein sequence ID" value="ACQ51913.1"/>
    <property type="molecule type" value="Genomic_DNA"/>
</dbReference>
<dbReference type="RefSeq" id="WP_003359407.1">
    <property type="nucleotide sequence ID" value="NC_012658.1"/>
</dbReference>
<dbReference type="SMR" id="C3KWH8"/>
<dbReference type="GeneID" id="5188014"/>
<dbReference type="KEGG" id="cbi:CLJ_B3965"/>
<dbReference type="HOGENOM" id="CLU_148710_2_2_9"/>
<dbReference type="Proteomes" id="UP000002333">
    <property type="component" value="Chromosome"/>
</dbReference>
<dbReference type="GO" id="GO:0022627">
    <property type="term" value="C:cytosolic small ribosomal subunit"/>
    <property type="evidence" value="ECO:0007669"/>
    <property type="project" value="TreeGrafter"/>
</dbReference>
<dbReference type="GO" id="GO:0070181">
    <property type="term" value="F:small ribosomal subunit rRNA binding"/>
    <property type="evidence" value="ECO:0007669"/>
    <property type="project" value="TreeGrafter"/>
</dbReference>
<dbReference type="GO" id="GO:0003735">
    <property type="term" value="F:structural constituent of ribosome"/>
    <property type="evidence" value="ECO:0007669"/>
    <property type="project" value="InterPro"/>
</dbReference>
<dbReference type="GO" id="GO:0006412">
    <property type="term" value="P:translation"/>
    <property type="evidence" value="ECO:0007669"/>
    <property type="project" value="UniProtKB-UniRule"/>
</dbReference>
<dbReference type="FunFam" id="4.10.640.10:FF:000004">
    <property type="entry name" value="30S ribosomal protein S18"/>
    <property type="match status" value="1"/>
</dbReference>
<dbReference type="Gene3D" id="4.10.640.10">
    <property type="entry name" value="Ribosomal protein S18"/>
    <property type="match status" value="1"/>
</dbReference>
<dbReference type="HAMAP" id="MF_00270">
    <property type="entry name" value="Ribosomal_bS18"/>
    <property type="match status" value="1"/>
</dbReference>
<dbReference type="InterPro" id="IPR001648">
    <property type="entry name" value="Ribosomal_bS18"/>
</dbReference>
<dbReference type="InterPro" id="IPR018275">
    <property type="entry name" value="Ribosomal_bS18_CS"/>
</dbReference>
<dbReference type="InterPro" id="IPR036870">
    <property type="entry name" value="Ribosomal_bS18_sf"/>
</dbReference>
<dbReference type="NCBIfam" id="TIGR00165">
    <property type="entry name" value="S18"/>
    <property type="match status" value="1"/>
</dbReference>
<dbReference type="PANTHER" id="PTHR13479">
    <property type="entry name" value="30S RIBOSOMAL PROTEIN S18"/>
    <property type="match status" value="1"/>
</dbReference>
<dbReference type="PANTHER" id="PTHR13479:SF40">
    <property type="entry name" value="SMALL RIBOSOMAL SUBUNIT PROTEIN BS18M"/>
    <property type="match status" value="1"/>
</dbReference>
<dbReference type="Pfam" id="PF01084">
    <property type="entry name" value="Ribosomal_S18"/>
    <property type="match status" value="1"/>
</dbReference>
<dbReference type="PRINTS" id="PR00974">
    <property type="entry name" value="RIBOSOMALS18"/>
</dbReference>
<dbReference type="SUPFAM" id="SSF46911">
    <property type="entry name" value="Ribosomal protein S18"/>
    <property type="match status" value="1"/>
</dbReference>
<dbReference type="PROSITE" id="PS00057">
    <property type="entry name" value="RIBOSOMAL_S18"/>
    <property type="match status" value="1"/>
</dbReference>
<name>RS18_CLOB6</name>
<reference key="1">
    <citation type="submission" date="2008-05" db="EMBL/GenBank/DDBJ databases">
        <title>Genome sequence of Clostridium botulinum Ba4 strain 657.</title>
        <authorList>
            <person name="Shrivastava S."/>
            <person name="Brown J.L."/>
            <person name="Bruce D."/>
            <person name="Detter C."/>
            <person name="Munk C."/>
            <person name="Smith L.A."/>
            <person name="Smith T.J."/>
            <person name="Sutton G."/>
            <person name="Brettin T.S."/>
        </authorList>
    </citation>
    <scope>NUCLEOTIDE SEQUENCE [LARGE SCALE GENOMIC DNA]</scope>
    <source>
        <strain>657 / Type Ba4</strain>
    </source>
</reference>
<keyword id="KW-0687">Ribonucleoprotein</keyword>
<keyword id="KW-0689">Ribosomal protein</keyword>
<keyword id="KW-0694">RNA-binding</keyword>
<keyword id="KW-0699">rRNA-binding</keyword>
<comment type="function">
    <text evidence="1">Binds as a heterodimer with protein bS6 to the central domain of the 16S rRNA, where it helps stabilize the platform of the 30S subunit.</text>
</comment>
<comment type="subunit">
    <text evidence="1">Part of the 30S ribosomal subunit. Forms a tight heterodimer with protein bS6.</text>
</comment>
<comment type="similarity">
    <text evidence="1">Belongs to the bacterial ribosomal protein bS18 family.</text>
</comment>
<evidence type="ECO:0000255" key="1">
    <source>
        <dbReference type="HAMAP-Rule" id="MF_00270"/>
    </source>
</evidence>
<evidence type="ECO:0000305" key="2"/>
<organism>
    <name type="scientific">Clostridium botulinum (strain 657 / Type Ba4)</name>
    <dbReference type="NCBI Taxonomy" id="515621"/>
    <lineage>
        <taxon>Bacteria</taxon>
        <taxon>Bacillati</taxon>
        <taxon>Bacillota</taxon>
        <taxon>Clostridia</taxon>
        <taxon>Eubacteriales</taxon>
        <taxon>Clostridiaceae</taxon>
        <taxon>Clostridium</taxon>
    </lineage>
</organism>
<sequence length="80" mass="9345">MAGREGGRRQRRTKRKVCTFCAEKSEAIDYKDINKLRKFVTERGKILPRRISGNCAKHQRELTRAIKRARNIALLPFTTE</sequence>
<accession>C3KWH8</accession>
<protein>
    <recommendedName>
        <fullName evidence="1">Small ribosomal subunit protein bS18</fullName>
    </recommendedName>
    <alternativeName>
        <fullName evidence="2">30S ribosomal protein S18</fullName>
    </alternativeName>
</protein>
<proteinExistence type="inferred from homology"/>